<reference key="1">
    <citation type="submission" date="2005-08" db="EMBL/GenBank/DDBJ databases">
        <title>Complete sequence of Synechococcus sp. CC9902.</title>
        <authorList>
            <person name="Copeland A."/>
            <person name="Lucas S."/>
            <person name="Lapidus A."/>
            <person name="Barry K."/>
            <person name="Detter J.C."/>
            <person name="Glavina T."/>
            <person name="Hammon N."/>
            <person name="Israni S."/>
            <person name="Pitluck S."/>
            <person name="Martinez M."/>
            <person name="Schmutz J."/>
            <person name="Larimer F."/>
            <person name="Land M."/>
            <person name="Kyrpides N."/>
            <person name="Ivanova N."/>
            <person name="Richardson P."/>
        </authorList>
    </citation>
    <scope>NUCLEOTIDE SEQUENCE [LARGE SCALE GENOMIC DNA]</scope>
    <source>
        <strain>CC9902</strain>
    </source>
</reference>
<keyword id="KW-0472">Membrane</keyword>
<keyword id="KW-0602">Photosynthesis</keyword>
<keyword id="KW-0604">Photosystem II</keyword>
<keyword id="KW-1185">Reference proteome</keyword>
<keyword id="KW-0793">Thylakoid</keyword>
<proteinExistence type="inferred from homology"/>
<evidence type="ECO:0000255" key="1">
    <source>
        <dbReference type="HAMAP-Rule" id="MF_01370"/>
    </source>
</evidence>
<evidence type="ECO:0000256" key="2">
    <source>
        <dbReference type="SAM" id="MobiDB-lite"/>
    </source>
</evidence>
<sequence length="131" mass="14658">MAEAKGTASIQFFRGVDEPVVPDIRLTRSRDGRTGQATFVFEQPQALAPETFGNIGGMWMVDEEGEMVTREVNGKFVNGIPSALEATYTWKTEEDFERFMRFAQRYADSNGLGYSQNQKSDQTDAATEEQA</sequence>
<accession>Q3AXG3</accession>
<organism>
    <name type="scientific">Synechococcus sp. (strain CC9902)</name>
    <dbReference type="NCBI Taxonomy" id="316279"/>
    <lineage>
        <taxon>Bacteria</taxon>
        <taxon>Bacillati</taxon>
        <taxon>Cyanobacteriota</taxon>
        <taxon>Cyanophyceae</taxon>
        <taxon>Synechococcales</taxon>
        <taxon>Synechococcaceae</taxon>
        <taxon>Synechococcus</taxon>
    </lineage>
</organism>
<dbReference type="EMBL" id="CP000097">
    <property type="protein sequence ID" value="ABB26237.1"/>
    <property type="molecule type" value="Genomic_DNA"/>
</dbReference>
<dbReference type="RefSeq" id="WP_011360062.1">
    <property type="nucleotide sequence ID" value="NC_007513.1"/>
</dbReference>
<dbReference type="SMR" id="Q3AXG3"/>
<dbReference type="STRING" id="316279.Syncc9902_1273"/>
<dbReference type="KEGG" id="sye:Syncc9902_1273"/>
<dbReference type="eggNOG" id="COG3310">
    <property type="taxonomic scope" value="Bacteria"/>
</dbReference>
<dbReference type="HOGENOM" id="CLU_137323_1_0_3"/>
<dbReference type="OrthoDB" id="559598at2"/>
<dbReference type="Proteomes" id="UP000002712">
    <property type="component" value="Chromosome"/>
</dbReference>
<dbReference type="GO" id="GO:0009654">
    <property type="term" value="C:photosystem II oxygen evolving complex"/>
    <property type="evidence" value="ECO:0007669"/>
    <property type="project" value="InterPro"/>
</dbReference>
<dbReference type="GO" id="GO:0031676">
    <property type="term" value="C:plasma membrane-derived thylakoid membrane"/>
    <property type="evidence" value="ECO:0007669"/>
    <property type="project" value="UniProtKB-SubCell"/>
</dbReference>
<dbReference type="GO" id="GO:0015979">
    <property type="term" value="P:photosynthesis"/>
    <property type="evidence" value="ECO:0007669"/>
    <property type="project" value="UniProtKB-UniRule"/>
</dbReference>
<dbReference type="Gene3D" id="2.40.30.220">
    <property type="entry name" value="Photosystem II Psb28"/>
    <property type="match status" value="1"/>
</dbReference>
<dbReference type="HAMAP" id="MF_01370">
    <property type="entry name" value="PSII_Psb28"/>
    <property type="match status" value="1"/>
</dbReference>
<dbReference type="InterPro" id="IPR038676">
    <property type="entry name" value="Psb28_c1_sf"/>
</dbReference>
<dbReference type="InterPro" id="IPR005610">
    <property type="entry name" value="PSII_Psb28_class-1"/>
</dbReference>
<dbReference type="NCBIfam" id="TIGR03047">
    <property type="entry name" value="PS_II_psb28"/>
    <property type="match status" value="1"/>
</dbReference>
<dbReference type="PANTHER" id="PTHR34963">
    <property type="match status" value="1"/>
</dbReference>
<dbReference type="PANTHER" id="PTHR34963:SF2">
    <property type="entry name" value="PHOTOSYSTEM II REACTION CENTER PSB28 PROTEIN, CHLOROPLASTIC"/>
    <property type="match status" value="1"/>
</dbReference>
<dbReference type="Pfam" id="PF03912">
    <property type="entry name" value="Psb28"/>
    <property type="match status" value="1"/>
</dbReference>
<protein>
    <recommendedName>
        <fullName evidence="1">Photosystem II reaction center Psb28 protein</fullName>
    </recommendedName>
    <alternativeName>
        <fullName evidence="1">Photosystem II 13 kDa protein</fullName>
    </alternativeName>
    <alternativeName>
        <fullName evidence="1">Photosystem II reaction center W protein</fullName>
    </alternativeName>
</protein>
<gene>
    <name evidence="1" type="primary">psb28</name>
    <name type="ordered locus">Syncc9902_1273</name>
</gene>
<name>PSB28_SYNS9</name>
<feature type="chain" id="PRO_0000271574" description="Photosystem II reaction center Psb28 protein">
    <location>
        <begin position="1"/>
        <end position="131"/>
    </location>
</feature>
<feature type="region of interest" description="Disordered" evidence="2">
    <location>
        <begin position="110"/>
        <end position="131"/>
    </location>
</feature>
<feature type="compositionally biased region" description="Polar residues" evidence="2">
    <location>
        <begin position="112"/>
        <end position="125"/>
    </location>
</feature>
<comment type="subunit">
    <text evidence="1">Part of the photosystem II complex.</text>
</comment>
<comment type="subcellular location">
    <subcellularLocation>
        <location evidence="1">Cellular thylakoid membrane</location>
        <topology evidence="1">Peripheral membrane protein</topology>
        <orientation evidence="1">Cytoplasmic side</orientation>
    </subcellularLocation>
</comment>
<comment type="similarity">
    <text evidence="1">Belongs to the Psb28 family.</text>
</comment>